<sequence length="449" mass="46221">MSHDSVPSPITARAGTPLRGRLRPPGDKSISHRAMILGLLSLGETRVEGLLEGDDVLRTAAAARALGAGIDRDGPGRWRVRGVGIGGLSDPEGVLDFGNAGTGSRLMMGVVGGQPVTATFDGDASLRKRPMRRILDPLVQMGAQILSEQAGGRVPLTLRGPEEAIPITYATPVASAQVKSAVLLAGLNAPGTTTVIEAAATRDHTERMLRLFGAEVTVAAHGPAGHGRAIALTGQPTLRAAEVIVPADPSSAAFPIVAALIVPGSDVVIEGVMMNPLRTGLITTLIEMGADIARLNERDEGGETVADLRVRASRLAGVTVPPERAPAMIDEYPVLAVAAAFAEGTTRMQGLHELRVKESDRLAAVADGLRANGVAHAVEGDDLIVHGDGRPAPGGGTVATHLDHRIAMAFLVMGLAAGEPVTVDDGAMIATSYPAFLADLRGLGAAFAE</sequence>
<protein>
    <recommendedName>
        <fullName evidence="1">3-phosphoshikimate 1-carboxyvinyltransferase</fullName>
        <ecNumber evidence="1">2.5.1.19</ecNumber>
    </recommendedName>
    <alternativeName>
        <fullName evidence="1">5-enolpyruvylshikimate-3-phosphate synthase</fullName>
        <shortName evidence="1">EPSP synthase</shortName>
        <shortName evidence="1">EPSPS</shortName>
    </alternativeName>
</protein>
<dbReference type="EC" id="2.5.1.19" evidence="1"/>
<dbReference type="EMBL" id="CP000943">
    <property type="protein sequence ID" value="ACA20805.1"/>
    <property type="molecule type" value="Genomic_DNA"/>
</dbReference>
<dbReference type="RefSeq" id="WP_012336181.1">
    <property type="nucleotide sequence ID" value="NC_010511.1"/>
</dbReference>
<dbReference type="SMR" id="B0UC54"/>
<dbReference type="STRING" id="426117.M446_6549"/>
<dbReference type="KEGG" id="met:M446_6549"/>
<dbReference type="eggNOG" id="COG0128">
    <property type="taxonomic scope" value="Bacteria"/>
</dbReference>
<dbReference type="HOGENOM" id="CLU_024321_0_1_5"/>
<dbReference type="UniPathway" id="UPA00053">
    <property type="reaction ID" value="UER00089"/>
</dbReference>
<dbReference type="GO" id="GO:0005737">
    <property type="term" value="C:cytoplasm"/>
    <property type="evidence" value="ECO:0007669"/>
    <property type="project" value="UniProtKB-SubCell"/>
</dbReference>
<dbReference type="GO" id="GO:0003866">
    <property type="term" value="F:3-phosphoshikimate 1-carboxyvinyltransferase activity"/>
    <property type="evidence" value="ECO:0007669"/>
    <property type="project" value="UniProtKB-UniRule"/>
</dbReference>
<dbReference type="GO" id="GO:0008652">
    <property type="term" value="P:amino acid biosynthetic process"/>
    <property type="evidence" value="ECO:0007669"/>
    <property type="project" value="UniProtKB-KW"/>
</dbReference>
<dbReference type="GO" id="GO:0009073">
    <property type="term" value="P:aromatic amino acid family biosynthetic process"/>
    <property type="evidence" value="ECO:0007669"/>
    <property type="project" value="UniProtKB-KW"/>
</dbReference>
<dbReference type="GO" id="GO:0009423">
    <property type="term" value="P:chorismate biosynthetic process"/>
    <property type="evidence" value="ECO:0007669"/>
    <property type="project" value="UniProtKB-UniRule"/>
</dbReference>
<dbReference type="CDD" id="cd01556">
    <property type="entry name" value="EPSP_synthase"/>
    <property type="match status" value="1"/>
</dbReference>
<dbReference type="FunFam" id="3.65.10.10:FF:000005">
    <property type="entry name" value="3-phosphoshikimate 1-carboxyvinyltransferase"/>
    <property type="match status" value="1"/>
</dbReference>
<dbReference type="Gene3D" id="3.65.10.10">
    <property type="entry name" value="Enolpyruvate transferase domain"/>
    <property type="match status" value="2"/>
</dbReference>
<dbReference type="HAMAP" id="MF_00210">
    <property type="entry name" value="EPSP_synth"/>
    <property type="match status" value="1"/>
</dbReference>
<dbReference type="InterPro" id="IPR001986">
    <property type="entry name" value="Enolpyruvate_Tfrase_dom"/>
</dbReference>
<dbReference type="InterPro" id="IPR036968">
    <property type="entry name" value="Enolpyruvate_Tfrase_sf"/>
</dbReference>
<dbReference type="InterPro" id="IPR006264">
    <property type="entry name" value="EPSP_synthase"/>
</dbReference>
<dbReference type="InterPro" id="IPR023193">
    <property type="entry name" value="EPSP_synthase_CS"/>
</dbReference>
<dbReference type="InterPro" id="IPR013792">
    <property type="entry name" value="RNA3'P_cycl/enolpyr_Trfase_a/b"/>
</dbReference>
<dbReference type="NCBIfam" id="TIGR01356">
    <property type="entry name" value="aroA"/>
    <property type="match status" value="1"/>
</dbReference>
<dbReference type="PANTHER" id="PTHR21090">
    <property type="entry name" value="AROM/DEHYDROQUINATE SYNTHASE"/>
    <property type="match status" value="1"/>
</dbReference>
<dbReference type="PANTHER" id="PTHR21090:SF5">
    <property type="entry name" value="PENTAFUNCTIONAL AROM POLYPEPTIDE"/>
    <property type="match status" value="1"/>
</dbReference>
<dbReference type="Pfam" id="PF00275">
    <property type="entry name" value="EPSP_synthase"/>
    <property type="match status" value="1"/>
</dbReference>
<dbReference type="PIRSF" id="PIRSF000505">
    <property type="entry name" value="EPSPS"/>
    <property type="match status" value="1"/>
</dbReference>
<dbReference type="SUPFAM" id="SSF55205">
    <property type="entry name" value="EPT/RTPC-like"/>
    <property type="match status" value="1"/>
</dbReference>
<dbReference type="PROSITE" id="PS00104">
    <property type="entry name" value="EPSP_SYNTHASE_1"/>
    <property type="match status" value="1"/>
</dbReference>
<dbReference type="PROSITE" id="PS00885">
    <property type="entry name" value="EPSP_SYNTHASE_2"/>
    <property type="match status" value="1"/>
</dbReference>
<reference key="1">
    <citation type="submission" date="2008-02" db="EMBL/GenBank/DDBJ databases">
        <title>Complete sequence of chromosome of Methylobacterium sp. 4-46.</title>
        <authorList>
            <consortium name="US DOE Joint Genome Institute"/>
            <person name="Copeland A."/>
            <person name="Lucas S."/>
            <person name="Lapidus A."/>
            <person name="Glavina del Rio T."/>
            <person name="Dalin E."/>
            <person name="Tice H."/>
            <person name="Bruce D."/>
            <person name="Goodwin L."/>
            <person name="Pitluck S."/>
            <person name="Chertkov O."/>
            <person name="Brettin T."/>
            <person name="Detter J.C."/>
            <person name="Han C."/>
            <person name="Kuske C.R."/>
            <person name="Schmutz J."/>
            <person name="Larimer F."/>
            <person name="Land M."/>
            <person name="Hauser L."/>
            <person name="Kyrpides N."/>
            <person name="Ivanova N."/>
            <person name="Marx C.J."/>
            <person name="Richardson P."/>
        </authorList>
    </citation>
    <scope>NUCLEOTIDE SEQUENCE [LARGE SCALE GENOMIC DNA]</scope>
    <source>
        <strain>4-46</strain>
    </source>
</reference>
<keyword id="KW-0028">Amino-acid biosynthesis</keyword>
<keyword id="KW-0057">Aromatic amino acid biosynthesis</keyword>
<keyword id="KW-0963">Cytoplasm</keyword>
<keyword id="KW-0808">Transferase</keyword>
<organism>
    <name type="scientific">Methylobacterium sp. (strain 4-46)</name>
    <dbReference type="NCBI Taxonomy" id="426117"/>
    <lineage>
        <taxon>Bacteria</taxon>
        <taxon>Pseudomonadati</taxon>
        <taxon>Pseudomonadota</taxon>
        <taxon>Alphaproteobacteria</taxon>
        <taxon>Hyphomicrobiales</taxon>
        <taxon>Methylobacteriaceae</taxon>
        <taxon>Methylobacterium</taxon>
    </lineage>
</organism>
<comment type="function">
    <text evidence="1">Catalyzes the transfer of the enolpyruvyl moiety of phosphoenolpyruvate (PEP) to the 5-hydroxyl of shikimate-3-phosphate (S3P) to produce enolpyruvyl shikimate-3-phosphate and inorganic phosphate.</text>
</comment>
<comment type="catalytic activity">
    <reaction evidence="1">
        <text>3-phosphoshikimate + phosphoenolpyruvate = 5-O-(1-carboxyvinyl)-3-phosphoshikimate + phosphate</text>
        <dbReference type="Rhea" id="RHEA:21256"/>
        <dbReference type="ChEBI" id="CHEBI:43474"/>
        <dbReference type="ChEBI" id="CHEBI:57701"/>
        <dbReference type="ChEBI" id="CHEBI:58702"/>
        <dbReference type="ChEBI" id="CHEBI:145989"/>
        <dbReference type="EC" id="2.5.1.19"/>
    </reaction>
    <physiologicalReaction direction="left-to-right" evidence="1">
        <dbReference type="Rhea" id="RHEA:21257"/>
    </physiologicalReaction>
</comment>
<comment type="pathway">
    <text evidence="1">Metabolic intermediate biosynthesis; chorismate biosynthesis; chorismate from D-erythrose 4-phosphate and phosphoenolpyruvate: step 6/7.</text>
</comment>
<comment type="subunit">
    <text evidence="1">Monomer.</text>
</comment>
<comment type="subcellular location">
    <subcellularLocation>
        <location evidence="1">Cytoplasm</location>
    </subcellularLocation>
</comment>
<comment type="similarity">
    <text evidence="1">Belongs to the EPSP synthase family.</text>
</comment>
<proteinExistence type="inferred from homology"/>
<name>AROA_METS4</name>
<accession>B0UC54</accession>
<feature type="chain" id="PRO_1000099722" description="3-phosphoshikimate 1-carboxyvinyltransferase">
    <location>
        <begin position="1"/>
        <end position="449"/>
    </location>
</feature>
<feature type="region of interest" description="Disordered" evidence="2">
    <location>
        <begin position="1"/>
        <end position="29"/>
    </location>
</feature>
<feature type="active site" description="Proton acceptor" evidence="1">
    <location>
        <position position="330"/>
    </location>
</feature>
<feature type="binding site" evidence="1">
    <location>
        <position position="28"/>
    </location>
    <ligand>
        <name>3-phosphoshikimate</name>
        <dbReference type="ChEBI" id="CHEBI:145989"/>
    </ligand>
</feature>
<feature type="binding site" evidence="1">
    <location>
        <position position="28"/>
    </location>
    <ligand>
        <name>phosphoenolpyruvate</name>
        <dbReference type="ChEBI" id="CHEBI:58702"/>
    </ligand>
</feature>
<feature type="binding site" evidence="1">
    <location>
        <position position="29"/>
    </location>
    <ligand>
        <name>3-phosphoshikimate</name>
        <dbReference type="ChEBI" id="CHEBI:145989"/>
    </ligand>
</feature>
<feature type="binding site" evidence="1">
    <location>
        <position position="33"/>
    </location>
    <ligand>
        <name>3-phosphoshikimate</name>
        <dbReference type="ChEBI" id="CHEBI:145989"/>
    </ligand>
</feature>
<feature type="binding site" evidence="1">
    <location>
        <position position="101"/>
    </location>
    <ligand>
        <name>phosphoenolpyruvate</name>
        <dbReference type="ChEBI" id="CHEBI:58702"/>
    </ligand>
</feature>
<feature type="binding site" evidence="1">
    <location>
        <position position="129"/>
    </location>
    <ligand>
        <name>phosphoenolpyruvate</name>
        <dbReference type="ChEBI" id="CHEBI:58702"/>
    </ligand>
</feature>
<feature type="binding site" evidence="1">
    <location>
        <position position="175"/>
    </location>
    <ligand>
        <name>3-phosphoshikimate</name>
        <dbReference type="ChEBI" id="CHEBI:145989"/>
    </ligand>
</feature>
<feature type="binding site" evidence="1">
    <location>
        <position position="177"/>
    </location>
    <ligand>
        <name>3-phosphoshikimate</name>
        <dbReference type="ChEBI" id="CHEBI:145989"/>
    </ligand>
</feature>
<feature type="binding site" evidence="1">
    <location>
        <position position="177"/>
    </location>
    <ligand>
        <name>phosphoenolpyruvate</name>
        <dbReference type="ChEBI" id="CHEBI:58702"/>
    </ligand>
</feature>
<feature type="binding site" evidence="1">
    <location>
        <position position="330"/>
    </location>
    <ligand>
        <name>3-phosphoshikimate</name>
        <dbReference type="ChEBI" id="CHEBI:145989"/>
    </ligand>
</feature>
<feature type="binding site" evidence="1">
    <location>
        <position position="357"/>
    </location>
    <ligand>
        <name>3-phosphoshikimate</name>
        <dbReference type="ChEBI" id="CHEBI:145989"/>
    </ligand>
</feature>
<feature type="binding site" evidence="1">
    <location>
        <position position="361"/>
    </location>
    <ligand>
        <name>phosphoenolpyruvate</name>
        <dbReference type="ChEBI" id="CHEBI:58702"/>
    </ligand>
</feature>
<feature type="binding site" evidence="1">
    <location>
        <position position="405"/>
    </location>
    <ligand>
        <name>phosphoenolpyruvate</name>
        <dbReference type="ChEBI" id="CHEBI:58702"/>
    </ligand>
</feature>
<evidence type="ECO:0000255" key="1">
    <source>
        <dbReference type="HAMAP-Rule" id="MF_00210"/>
    </source>
</evidence>
<evidence type="ECO:0000256" key="2">
    <source>
        <dbReference type="SAM" id="MobiDB-lite"/>
    </source>
</evidence>
<gene>
    <name evidence="1" type="primary">aroA</name>
    <name type="ordered locus">M446_6549</name>
</gene>